<proteinExistence type="inferred from homology"/>
<feature type="initiator methionine" description="Removed" evidence="1">
    <location>
        <position position="1"/>
    </location>
</feature>
<feature type="chain" id="PRO_0000145997" description="Phosphoglycerate kinase">
    <location>
        <begin position="2"/>
        <end position="387"/>
    </location>
</feature>
<feature type="binding site" evidence="1">
    <location>
        <begin position="21"/>
        <end position="23"/>
    </location>
    <ligand>
        <name>substrate</name>
    </ligand>
</feature>
<feature type="binding site" evidence="1">
    <location>
        <position position="36"/>
    </location>
    <ligand>
        <name>substrate</name>
    </ligand>
</feature>
<feature type="binding site" evidence="1">
    <location>
        <begin position="59"/>
        <end position="62"/>
    </location>
    <ligand>
        <name>substrate</name>
    </ligand>
</feature>
<feature type="binding site" evidence="1">
    <location>
        <position position="113"/>
    </location>
    <ligand>
        <name>substrate</name>
    </ligand>
</feature>
<feature type="binding site" evidence="1">
    <location>
        <position position="146"/>
    </location>
    <ligand>
        <name>substrate</name>
    </ligand>
</feature>
<feature type="binding site" evidence="1">
    <location>
        <position position="197"/>
    </location>
    <ligand>
        <name>ATP</name>
        <dbReference type="ChEBI" id="CHEBI:30616"/>
    </ligand>
</feature>
<feature type="binding site" evidence="1">
    <location>
        <position position="314"/>
    </location>
    <ligand>
        <name>ATP</name>
        <dbReference type="ChEBI" id="CHEBI:30616"/>
    </ligand>
</feature>
<feature type="binding site" evidence="1">
    <location>
        <begin position="340"/>
        <end position="343"/>
    </location>
    <ligand>
        <name>ATP</name>
        <dbReference type="ChEBI" id="CHEBI:30616"/>
    </ligand>
</feature>
<gene>
    <name type="primary">pgk</name>
    <name type="ordered locus">STM3069</name>
</gene>
<accession>P65702</accession>
<accession>Q8XG18</accession>
<evidence type="ECO:0000250" key="1"/>
<evidence type="ECO:0000305" key="2"/>
<protein>
    <recommendedName>
        <fullName>Phosphoglycerate kinase</fullName>
        <ecNumber>2.7.2.3</ecNumber>
    </recommendedName>
</protein>
<comment type="catalytic activity">
    <reaction>
        <text>(2R)-3-phosphoglycerate + ATP = (2R)-3-phospho-glyceroyl phosphate + ADP</text>
        <dbReference type="Rhea" id="RHEA:14801"/>
        <dbReference type="ChEBI" id="CHEBI:30616"/>
        <dbReference type="ChEBI" id="CHEBI:57604"/>
        <dbReference type="ChEBI" id="CHEBI:58272"/>
        <dbReference type="ChEBI" id="CHEBI:456216"/>
        <dbReference type="EC" id="2.7.2.3"/>
    </reaction>
</comment>
<comment type="pathway">
    <text>Carbohydrate degradation; glycolysis; pyruvate from D-glyceraldehyde 3-phosphate: step 2/5.</text>
</comment>
<comment type="subunit">
    <text evidence="1">Monomer.</text>
</comment>
<comment type="subcellular location">
    <subcellularLocation>
        <location evidence="2">Cytoplasm</location>
    </subcellularLocation>
</comment>
<comment type="similarity">
    <text evidence="2">Belongs to the phosphoglycerate kinase family.</text>
</comment>
<sequence length="387" mass="41132">MSVIKMTDLDLAGKRVFIRADLNVPVKEGKVTSDARIRASLPTIELALKQGAKVMVTSHLGRPTEGEYNEEFSLLPVVNYLKDKLSNPVRLVKDYLDGVDVAEGELVVLENVRFNKGEKKDDEALSKKYAALCDVFVMDAFGTAHRAQASTHGIGKFADVACAGPLLAAELDALGKALKEPARPMVAIVGGSKVSTKLTVLDSLSKIADQLIVGGGIANTFVAAQGHSVGKSLYEADLVDEAKRLLTTCDIPVPTDVRVATEFSETAPATLKSVNDVKEDEQILDIGDASAQQLAEILKNAKTILWNGPVGVFEFPNFRKGTEIVANAIADSEAFSIAGGGDTLAAIDLFGIADKISYISTGGGAFLEFVEGKVLPAVAMLEERAKK</sequence>
<reference key="1">
    <citation type="journal article" date="2001" name="Nature">
        <title>Complete genome sequence of Salmonella enterica serovar Typhimurium LT2.</title>
        <authorList>
            <person name="McClelland M."/>
            <person name="Sanderson K.E."/>
            <person name="Spieth J."/>
            <person name="Clifton S.W."/>
            <person name="Latreille P."/>
            <person name="Courtney L."/>
            <person name="Porwollik S."/>
            <person name="Ali J."/>
            <person name="Dante M."/>
            <person name="Du F."/>
            <person name="Hou S."/>
            <person name="Layman D."/>
            <person name="Leonard S."/>
            <person name="Nguyen C."/>
            <person name="Scott K."/>
            <person name="Holmes A."/>
            <person name="Grewal N."/>
            <person name="Mulvaney E."/>
            <person name="Ryan E."/>
            <person name="Sun H."/>
            <person name="Florea L."/>
            <person name="Miller W."/>
            <person name="Stoneking T."/>
            <person name="Nhan M."/>
            <person name="Waterston R."/>
            <person name="Wilson R.K."/>
        </authorList>
    </citation>
    <scope>NUCLEOTIDE SEQUENCE [LARGE SCALE GENOMIC DNA]</scope>
    <source>
        <strain>LT2 / SGSC1412 / ATCC 700720</strain>
    </source>
</reference>
<organism>
    <name type="scientific">Salmonella typhimurium (strain LT2 / SGSC1412 / ATCC 700720)</name>
    <dbReference type="NCBI Taxonomy" id="99287"/>
    <lineage>
        <taxon>Bacteria</taxon>
        <taxon>Pseudomonadati</taxon>
        <taxon>Pseudomonadota</taxon>
        <taxon>Gammaproteobacteria</taxon>
        <taxon>Enterobacterales</taxon>
        <taxon>Enterobacteriaceae</taxon>
        <taxon>Salmonella</taxon>
    </lineage>
</organism>
<name>PGK_SALTY</name>
<keyword id="KW-0067">ATP-binding</keyword>
<keyword id="KW-0963">Cytoplasm</keyword>
<keyword id="KW-0324">Glycolysis</keyword>
<keyword id="KW-0418">Kinase</keyword>
<keyword id="KW-0547">Nucleotide-binding</keyword>
<keyword id="KW-1185">Reference proteome</keyword>
<keyword id="KW-0808">Transferase</keyword>
<dbReference type="EC" id="2.7.2.3"/>
<dbReference type="EMBL" id="AE006468">
    <property type="protein sequence ID" value="AAL21944.1"/>
    <property type="molecule type" value="Genomic_DNA"/>
</dbReference>
<dbReference type="RefSeq" id="NP_461985.1">
    <property type="nucleotide sequence ID" value="NC_003197.2"/>
</dbReference>
<dbReference type="RefSeq" id="WP_000111274.1">
    <property type="nucleotide sequence ID" value="NC_003197.2"/>
</dbReference>
<dbReference type="SMR" id="P65702"/>
<dbReference type="STRING" id="99287.STM3069"/>
<dbReference type="PaxDb" id="99287-STM3069"/>
<dbReference type="GeneID" id="1254592"/>
<dbReference type="KEGG" id="stm:STM3069"/>
<dbReference type="PATRIC" id="fig|99287.12.peg.3252"/>
<dbReference type="HOGENOM" id="CLU_025427_0_2_6"/>
<dbReference type="OMA" id="DMIFDIG"/>
<dbReference type="PhylomeDB" id="P65702"/>
<dbReference type="BioCyc" id="SENT99287:STM3069-MONOMER"/>
<dbReference type="UniPathway" id="UPA00109">
    <property type="reaction ID" value="UER00185"/>
</dbReference>
<dbReference type="Proteomes" id="UP000001014">
    <property type="component" value="Chromosome"/>
</dbReference>
<dbReference type="GO" id="GO:0005829">
    <property type="term" value="C:cytosol"/>
    <property type="evidence" value="ECO:0000318"/>
    <property type="project" value="GO_Central"/>
</dbReference>
<dbReference type="GO" id="GO:0043531">
    <property type="term" value="F:ADP binding"/>
    <property type="evidence" value="ECO:0000318"/>
    <property type="project" value="GO_Central"/>
</dbReference>
<dbReference type="GO" id="GO:0005524">
    <property type="term" value="F:ATP binding"/>
    <property type="evidence" value="ECO:0000318"/>
    <property type="project" value="GO_Central"/>
</dbReference>
<dbReference type="GO" id="GO:0004618">
    <property type="term" value="F:phosphoglycerate kinase activity"/>
    <property type="evidence" value="ECO:0000318"/>
    <property type="project" value="GO_Central"/>
</dbReference>
<dbReference type="GO" id="GO:0006094">
    <property type="term" value="P:gluconeogenesis"/>
    <property type="evidence" value="ECO:0000318"/>
    <property type="project" value="GO_Central"/>
</dbReference>
<dbReference type="GO" id="GO:0006096">
    <property type="term" value="P:glycolytic process"/>
    <property type="evidence" value="ECO:0000318"/>
    <property type="project" value="GO_Central"/>
</dbReference>
<dbReference type="FunFam" id="3.40.50.1260:FF:000001">
    <property type="entry name" value="Phosphoglycerate kinase"/>
    <property type="match status" value="1"/>
</dbReference>
<dbReference type="FunFam" id="3.40.50.1260:FF:000002">
    <property type="entry name" value="Phosphoglycerate kinase"/>
    <property type="match status" value="1"/>
</dbReference>
<dbReference type="Gene3D" id="3.40.50.1260">
    <property type="entry name" value="Phosphoglycerate kinase, N-terminal domain"/>
    <property type="match status" value="2"/>
</dbReference>
<dbReference type="HAMAP" id="MF_00145">
    <property type="entry name" value="Phosphoglyc_kinase"/>
    <property type="match status" value="1"/>
</dbReference>
<dbReference type="InterPro" id="IPR001576">
    <property type="entry name" value="Phosphoglycerate_kinase"/>
</dbReference>
<dbReference type="InterPro" id="IPR015911">
    <property type="entry name" value="Phosphoglycerate_kinase_CS"/>
</dbReference>
<dbReference type="InterPro" id="IPR015824">
    <property type="entry name" value="Phosphoglycerate_kinase_N"/>
</dbReference>
<dbReference type="InterPro" id="IPR036043">
    <property type="entry name" value="Phosphoglycerate_kinase_sf"/>
</dbReference>
<dbReference type="PANTHER" id="PTHR11406">
    <property type="entry name" value="PHOSPHOGLYCERATE KINASE"/>
    <property type="match status" value="1"/>
</dbReference>
<dbReference type="PANTHER" id="PTHR11406:SF23">
    <property type="entry name" value="PHOSPHOGLYCERATE KINASE 1, CHLOROPLASTIC-RELATED"/>
    <property type="match status" value="1"/>
</dbReference>
<dbReference type="Pfam" id="PF00162">
    <property type="entry name" value="PGK"/>
    <property type="match status" value="1"/>
</dbReference>
<dbReference type="PIRSF" id="PIRSF000724">
    <property type="entry name" value="Pgk"/>
    <property type="match status" value="1"/>
</dbReference>
<dbReference type="PRINTS" id="PR00477">
    <property type="entry name" value="PHGLYCKINASE"/>
</dbReference>
<dbReference type="SUPFAM" id="SSF53748">
    <property type="entry name" value="Phosphoglycerate kinase"/>
    <property type="match status" value="1"/>
</dbReference>
<dbReference type="PROSITE" id="PS00111">
    <property type="entry name" value="PGLYCERATE_KINASE"/>
    <property type="match status" value="1"/>
</dbReference>